<dbReference type="EC" id="4.1.1.48" evidence="1"/>
<dbReference type="EMBL" id="CP001219">
    <property type="protein sequence ID" value="ACK80131.1"/>
    <property type="molecule type" value="Genomic_DNA"/>
</dbReference>
<dbReference type="RefSeq" id="WP_009567143.1">
    <property type="nucleotide sequence ID" value="NC_011761.1"/>
</dbReference>
<dbReference type="SMR" id="B7JBC0"/>
<dbReference type="STRING" id="243159.AFE_3242"/>
<dbReference type="PaxDb" id="243159-AFE_3242"/>
<dbReference type="GeneID" id="65282222"/>
<dbReference type="KEGG" id="afr:AFE_3242"/>
<dbReference type="eggNOG" id="COG0134">
    <property type="taxonomic scope" value="Bacteria"/>
</dbReference>
<dbReference type="HOGENOM" id="CLU_034247_2_0_6"/>
<dbReference type="UniPathway" id="UPA00035">
    <property type="reaction ID" value="UER00043"/>
</dbReference>
<dbReference type="Proteomes" id="UP000001362">
    <property type="component" value="Chromosome"/>
</dbReference>
<dbReference type="GO" id="GO:0004425">
    <property type="term" value="F:indole-3-glycerol-phosphate synthase activity"/>
    <property type="evidence" value="ECO:0007669"/>
    <property type="project" value="UniProtKB-UniRule"/>
</dbReference>
<dbReference type="GO" id="GO:0004640">
    <property type="term" value="F:phosphoribosylanthranilate isomerase activity"/>
    <property type="evidence" value="ECO:0007669"/>
    <property type="project" value="TreeGrafter"/>
</dbReference>
<dbReference type="GO" id="GO:0000162">
    <property type="term" value="P:L-tryptophan biosynthetic process"/>
    <property type="evidence" value="ECO:0007669"/>
    <property type="project" value="UniProtKB-UniRule"/>
</dbReference>
<dbReference type="CDD" id="cd00331">
    <property type="entry name" value="IGPS"/>
    <property type="match status" value="1"/>
</dbReference>
<dbReference type="FunFam" id="3.20.20.70:FF:000024">
    <property type="entry name" value="Indole-3-glycerol phosphate synthase"/>
    <property type="match status" value="1"/>
</dbReference>
<dbReference type="Gene3D" id="3.20.20.70">
    <property type="entry name" value="Aldolase class I"/>
    <property type="match status" value="1"/>
</dbReference>
<dbReference type="HAMAP" id="MF_00134_B">
    <property type="entry name" value="IGPS_B"/>
    <property type="match status" value="1"/>
</dbReference>
<dbReference type="InterPro" id="IPR013785">
    <property type="entry name" value="Aldolase_TIM"/>
</dbReference>
<dbReference type="InterPro" id="IPR045186">
    <property type="entry name" value="Indole-3-glycerol_P_synth"/>
</dbReference>
<dbReference type="InterPro" id="IPR013798">
    <property type="entry name" value="Indole-3-glycerol_P_synth_dom"/>
</dbReference>
<dbReference type="InterPro" id="IPR001468">
    <property type="entry name" value="Indole-3-GlycerolPSynthase_CS"/>
</dbReference>
<dbReference type="InterPro" id="IPR011060">
    <property type="entry name" value="RibuloseP-bd_barrel"/>
</dbReference>
<dbReference type="NCBIfam" id="NF001370">
    <property type="entry name" value="PRK00278.1-2"/>
    <property type="match status" value="1"/>
</dbReference>
<dbReference type="NCBIfam" id="NF001373">
    <property type="entry name" value="PRK00278.1-6"/>
    <property type="match status" value="1"/>
</dbReference>
<dbReference type="NCBIfam" id="NF001377">
    <property type="entry name" value="PRK00278.2-4"/>
    <property type="match status" value="1"/>
</dbReference>
<dbReference type="PANTHER" id="PTHR22854:SF2">
    <property type="entry name" value="INDOLE-3-GLYCEROL-PHOSPHATE SYNTHASE"/>
    <property type="match status" value="1"/>
</dbReference>
<dbReference type="PANTHER" id="PTHR22854">
    <property type="entry name" value="TRYPTOPHAN BIOSYNTHESIS PROTEIN"/>
    <property type="match status" value="1"/>
</dbReference>
<dbReference type="Pfam" id="PF00218">
    <property type="entry name" value="IGPS"/>
    <property type="match status" value="1"/>
</dbReference>
<dbReference type="SUPFAM" id="SSF51366">
    <property type="entry name" value="Ribulose-phoshate binding barrel"/>
    <property type="match status" value="1"/>
</dbReference>
<dbReference type="PROSITE" id="PS00614">
    <property type="entry name" value="IGPS"/>
    <property type="match status" value="1"/>
</dbReference>
<reference key="1">
    <citation type="journal article" date="2008" name="BMC Genomics">
        <title>Acidithiobacillus ferrooxidans metabolism: from genome sequence to industrial applications.</title>
        <authorList>
            <person name="Valdes J."/>
            <person name="Pedroso I."/>
            <person name="Quatrini R."/>
            <person name="Dodson R.J."/>
            <person name="Tettelin H."/>
            <person name="Blake R. II"/>
            <person name="Eisen J.A."/>
            <person name="Holmes D.S."/>
        </authorList>
    </citation>
    <scope>NUCLEOTIDE SEQUENCE [LARGE SCALE GENOMIC DNA]</scope>
    <source>
        <strain>ATCC 23270 / DSM 14882 / CIP 104768 / NCIMB 8455</strain>
    </source>
</reference>
<accession>B7JBC0</accession>
<proteinExistence type="inferred from homology"/>
<comment type="catalytic activity">
    <reaction evidence="1">
        <text>1-(2-carboxyphenylamino)-1-deoxy-D-ribulose 5-phosphate + H(+) = (1S,2R)-1-C-(indol-3-yl)glycerol 3-phosphate + CO2 + H2O</text>
        <dbReference type="Rhea" id="RHEA:23476"/>
        <dbReference type="ChEBI" id="CHEBI:15377"/>
        <dbReference type="ChEBI" id="CHEBI:15378"/>
        <dbReference type="ChEBI" id="CHEBI:16526"/>
        <dbReference type="ChEBI" id="CHEBI:58613"/>
        <dbReference type="ChEBI" id="CHEBI:58866"/>
        <dbReference type="EC" id="4.1.1.48"/>
    </reaction>
</comment>
<comment type="pathway">
    <text evidence="1">Amino-acid biosynthesis; L-tryptophan biosynthesis; L-tryptophan from chorismate: step 4/5.</text>
</comment>
<comment type="similarity">
    <text evidence="1">Belongs to the TrpC family.</text>
</comment>
<name>TRPC_ACIF2</name>
<feature type="chain" id="PRO_1000117767" description="Indole-3-glycerol phosphate synthase">
    <location>
        <begin position="1"/>
        <end position="263"/>
    </location>
</feature>
<protein>
    <recommendedName>
        <fullName evidence="1">Indole-3-glycerol phosphate synthase</fullName>
        <shortName evidence="1">IGPS</shortName>
        <ecNumber evidence="1">4.1.1.48</ecNumber>
    </recommendedName>
</protein>
<keyword id="KW-0028">Amino-acid biosynthesis</keyword>
<keyword id="KW-0057">Aromatic amino acid biosynthesis</keyword>
<keyword id="KW-0210">Decarboxylase</keyword>
<keyword id="KW-0456">Lyase</keyword>
<keyword id="KW-1185">Reference proteome</keyword>
<keyword id="KW-0822">Tryptophan biosynthesis</keyword>
<sequence length="263" mass="28695">MTDILQEIIAHKREELVERQTRLGLAELQAAVALTAPPRNFVGAVRARMAQGQPAVIAEIKKASPSAGVIREDFNPVTIAQDYAAHGAACLSVLTDEHYFQGADLYLAAAREACPLPVLRKDFCIDPYQVWEARAIGADAILLIVAALSDAELQSLEATAQSLDLAVLVEVHDAAELQRALKLRTPLIGINNRDLRRFVTEIETTLKLLPEIPRERIVVTESGIRSREEVATLRAAGVGAFLVGEAFMRTAQPGDALQHLFFD</sequence>
<gene>
    <name evidence="1" type="primary">trpC</name>
    <name type="ordered locus">AFE_3242</name>
</gene>
<evidence type="ECO:0000255" key="1">
    <source>
        <dbReference type="HAMAP-Rule" id="MF_00134"/>
    </source>
</evidence>
<organism>
    <name type="scientific">Acidithiobacillus ferrooxidans (strain ATCC 23270 / DSM 14882 / CIP 104768 / NCIMB 8455)</name>
    <name type="common">Ferrobacillus ferrooxidans (strain ATCC 23270)</name>
    <dbReference type="NCBI Taxonomy" id="243159"/>
    <lineage>
        <taxon>Bacteria</taxon>
        <taxon>Pseudomonadati</taxon>
        <taxon>Pseudomonadota</taxon>
        <taxon>Acidithiobacillia</taxon>
        <taxon>Acidithiobacillales</taxon>
        <taxon>Acidithiobacillaceae</taxon>
        <taxon>Acidithiobacillus</taxon>
    </lineage>
</organism>